<name>ATPL_HELP2</name>
<proteinExistence type="inferred from homology"/>
<feature type="chain" id="PRO_1000184393" description="ATP synthase subunit c">
    <location>
        <begin position="1"/>
        <end position="105"/>
    </location>
</feature>
<feature type="transmembrane region" description="Helical" evidence="1">
    <location>
        <begin position="3"/>
        <end position="23"/>
    </location>
</feature>
<feature type="transmembrane region" description="Helical" evidence="1">
    <location>
        <begin position="32"/>
        <end position="52"/>
    </location>
</feature>
<feature type="transmembrane region" description="Helical" evidence="1">
    <location>
        <begin position="78"/>
        <end position="98"/>
    </location>
</feature>
<feature type="site" description="Reversibly protonated during proton transport" evidence="1">
    <location>
        <position position="84"/>
    </location>
</feature>
<gene>
    <name evidence="1" type="primary">atpE</name>
    <name type="ordered locus">HPP12_1177</name>
</gene>
<protein>
    <recommendedName>
        <fullName evidence="1">ATP synthase subunit c</fullName>
    </recommendedName>
    <alternativeName>
        <fullName evidence="1">ATP synthase F(0) sector subunit c</fullName>
    </alternativeName>
    <alternativeName>
        <fullName evidence="1">F-type ATPase subunit c</fullName>
        <shortName evidence="1">F-ATPase subunit c</shortName>
    </alternativeName>
    <alternativeName>
        <fullName evidence="1">Lipid-binding protein</fullName>
    </alternativeName>
</protein>
<keyword id="KW-0066">ATP synthesis</keyword>
<keyword id="KW-0997">Cell inner membrane</keyword>
<keyword id="KW-1003">Cell membrane</keyword>
<keyword id="KW-0138">CF(0)</keyword>
<keyword id="KW-0375">Hydrogen ion transport</keyword>
<keyword id="KW-0406">Ion transport</keyword>
<keyword id="KW-0446">Lipid-binding</keyword>
<keyword id="KW-0472">Membrane</keyword>
<keyword id="KW-0812">Transmembrane</keyword>
<keyword id="KW-1133">Transmembrane helix</keyword>
<keyword id="KW-0813">Transport</keyword>
<comment type="function">
    <text evidence="1">F(1)F(0) ATP synthase produces ATP from ADP in the presence of a proton or sodium gradient. F-type ATPases consist of two structural domains, F(1) containing the extramembraneous catalytic core and F(0) containing the membrane proton channel, linked together by a central stalk and a peripheral stalk. During catalysis, ATP synthesis in the catalytic domain of F(1) is coupled via a rotary mechanism of the central stalk subunits to proton translocation.</text>
</comment>
<comment type="function">
    <text evidence="1">Key component of the F(0) channel; it plays a direct role in translocation across the membrane. A homomeric c-ring of between 10-14 subunits forms the central stalk rotor element with the F(1) delta and epsilon subunits.</text>
</comment>
<comment type="subunit">
    <text evidence="1">F-type ATPases have 2 components, F(1) - the catalytic core - and F(0) - the membrane proton channel. F(1) has five subunits: alpha(3), beta(3), gamma(1), delta(1), epsilon(1). F(0) has three main subunits: a(1), b(2) and c(10-14). The alpha and beta chains form an alternating ring which encloses part of the gamma chain. F(1) is attached to F(0) by a central stalk formed by the gamma and epsilon chains, while a peripheral stalk is formed by the delta and b chains.</text>
</comment>
<comment type="subcellular location">
    <subcellularLocation>
        <location evidence="1">Cell inner membrane</location>
        <topology evidence="1">Multi-pass membrane protein</topology>
    </subcellularLocation>
</comment>
<comment type="similarity">
    <text evidence="1">Belongs to the ATPase C chain family.</text>
</comment>
<reference key="1">
    <citation type="submission" date="2008-10" db="EMBL/GenBank/DDBJ databases">
        <title>The complete genome sequence of Helicobacter pylori strain P12.</title>
        <authorList>
            <person name="Fischer W."/>
            <person name="Windhager L."/>
            <person name="Karnholz A."/>
            <person name="Zeiller M."/>
            <person name="Zimmer R."/>
            <person name="Haas R."/>
        </authorList>
    </citation>
    <scope>NUCLEOTIDE SEQUENCE [LARGE SCALE GENOMIC DNA]</scope>
    <source>
        <strain>P12</strain>
    </source>
</reference>
<sequence length="105" mass="10658">MKFLALFFLALAGVAFAHDGGMGGMDMIKSYSILGAMIGLGIAAFGGAIGMGNAAAATITGTARNPGVGGKLLTTMFVAMAMIEAQVIYTLVFAIIAIYSNPFLS</sequence>
<accession>B6JN51</accession>
<evidence type="ECO:0000255" key="1">
    <source>
        <dbReference type="HAMAP-Rule" id="MF_01396"/>
    </source>
</evidence>
<dbReference type="EMBL" id="CP001217">
    <property type="protein sequence ID" value="ACJ08329.1"/>
    <property type="molecule type" value="Genomic_DNA"/>
</dbReference>
<dbReference type="SMR" id="B6JN51"/>
<dbReference type="KEGG" id="hpp:HPP12_1177"/>
<dbReference type="HOGENOM" id="CLU_148047_0_1_7"/>
<dbReference type="Proteomes" id="UP000008198">
    <property type="component" value="Chromosome"/>
</dbReference>
<dbReference type="GO" id="GO:0005886">
    <property type="term" value="C:plasma membrane"/>
    <property type="evidence" value="ECO:0007669"/>
    <property type="project" value="UniProtKB-SubCell"/>
</dbReference>
<dbReference type="GO" id="GO:0045259">
    <property type="term" value="C:proton-transporting ATP synthase complex"/>
    <property type="evidence" value="ECO:0007669"/>
    <property type="project" value="UniProtKB-KW"/>
</dbReference>
<dbReference type="GO" id="GO:0033177">
    <property type="term" value="C:proton-transporting two-sector ATPase complex, proton-transporting domain"/>
    <property type="evidence" value="ECO:0007669"/>
    <property type="project" value="InterPro"/>
</dbReference>
<dbReference type="GO" id="GO:0008289">
    <property type="term" value="F:lipid binding"/>
    <property type="evidence" value="ECO:0007669"/>
    <property type="project" value="UniProtKB-KW"/>
</dbReference>
<dbReference type="GO" id="GO:0046933">
    <property type="term" value="F:proton-transporting ATP synthase activity, rotational mechanism"/>
    <property type="evidence" value="ECO:0007669"/>
    <property type="project" value="UniProtKB-UniRule"/>
</dbReference>
<dbReference type="CDD" id="cd18121">
    <property type="entry name" value="ATP-synt_Fo_c"/>
    <property type="match status" value="1"/>
</dbReference>
<dbReference type="Gene3D" id="1.20.20.10">
    <property type="entry name" value="F1F0 ATP synthase subunit C"/>
    <property type="match status" value="1"/>
</dbReference>
<dbReference type="HAMAP" id="MF_01396">
    <property type="entry name" value="ATP_synth_c_bact"/>
    <property type="match status" value="1"/>
</dbReference>
<dbReference type="InterPro" id="IPR000454">
    <property type="entry name" value="ATP_synth_F0_csu"/>
</dbReference>
<dbReference type="InterPro" id="IPR020537">
    <property type="entry name" value="ATP_synth_F0_csu_DDCD_BS"/>
</dbReference>
<dbReference type="InterPro" id="IPR038662">
    <property type="entry name" value="ATP_synth_F0_csu_sf"/>
</dbReference>
<dbReference type="InterPro" id="IPR002379">
    <property type="entry name" value="ATPase_proteolipid_c-like_dom"/>
</dbReference>
<dbReference type="InterPro" id="IPR035921">
    <property type="entry name" value="F/V-ATP_Csub_sf"/>
</dbReference>
<dbReference type="NCBIfam" id="NF006295">
    <property type="entry name" value="PRK08482.1"/>
    <property type="match status" value="1"/>
</dbReference>
<dbReference type="Pfam" id="PF00137">
    <property type="entry name" value="ATP-synt_C"/>
    <property type="match status" value="1"/>
</dbReference>
<dbReference type="PRINTS" id="PR00124">
    <property type="entry name" value="ATPASEC"/>
</dbReference>
<dbReference type="SUPFAM" id="SSF81333">
    <property type="entry name" value="F1F0 ATP synthase subunit C"/>
    <property type="match status" value="1"/>
</dbReference>
<dbReference type="PROSITE" id="PS00605">
    <property type="entry name" value="ATPASE_C"/>
    <property type="match status" value="1"/>
</dbReference>
<organism>
    <name type="scientific">Helicobacter pylori (strain P12)</name>
    <dbReference type="NCBI Taxonomy" id="570508"/>
    <lineage>
        <taxon>Bacteria</taxon>
        <taxon>Pseudomonadati</taxon>
        <taxon>Campylobacterota</taxon>
        <taxon>Epsilonproteobacteria</taxon>
        <taxon>Campylobacterales</taxon>
        <taxon>Helicobacteraceae</taxon>
        <taxon>Helicobacter</taxon>
    </lineage>
</organism>